<evidence type="ECO:0000255" key="1">
    <source>
        <dbReference type="PROSITE-ProRule" id="PRU00515"/>
    </source>
</evidence>
<evidence type="ECO:0000269" key="2">
    <source>
    </source>
</evidence>
<evidence type="ECO:0000269" key="3">
    <source>
    </source>
</evidence>
<evidence type="ECO:0000269" key="4">
    <source>
    </source>
</evidence>
<evidence type="ECO:0000303" key="5">
    <source>
    </source>
</evidence>
<evidence type="ECO:0000305" key="6"/>
<evidence type="ECO:0000305" key="7">
    <source>
    </source>
</evidence>
<evidence type="ECO:0007744" key="8">
    <source>
        <dbReference type="PDB" id="2VKL"/>
    </source>
</evidence>
<evidence type="ECO:0007829" key="9">
    <source>
        <dbReference type="PDB" id="5MPV"/>
    </source>
</evidence>
<feature type="chain" id="PRO_0000119200" description="Intracellular chorismate mutase">
    <location>
        <begin position="1"/>
        <end position="105"/>
    </location>
</feature>
<feature type="domain" description="Chorismate mutase" evidence="1">
    <location>
        <begin position="23"/>
        <end position="105"/>
    </location>
</feature>
<feature type="binding site" evidence="7 8">
    <location>
        <position position="61"/>
    </location>
    <ligand>
        <name>chorismate</name>
        <dbReference type="ChEBI" id="CHEBI:29748"/>
    </ligand>
</feature>
<feature type="binding site" evidence="7 8">
    <location>
        <position position="70"/>
    </location>
    <ligand>
        <name>chorismate</name>
        <dbReference type="ChEBI" id="CHEBI:29748"/>
    </ligand>
</feature>
<feature type="binding site" evidence="7 8">
    <location>
        <position position="74"/>
    </location>
    <ligand>
        <name>chorismate</name>
        <dbReference type="ChEBI" id="CHEBI:29748"/>
    </ligand>
</feature>
<feature type="site" description="Important for catalysis" evidence="4">
    <location>
        <position position="61"/>
    </location>
</feature>
<feature type="site" description="Important for activation via AroG" evidence="4">
    <location>
        <position position="101"/>
    </location>
</feature>
<feature type="site" description="Important for activation via AroG" evidence="4">
    <location>
        <position position="102"/>
    </location>
</feature>
<feature type="site" description="Important for activation via AroG" evidence="4">
    <location>
        <position position="103"/>
    </location>
</feature>
<feature type="mutagenesis site" description="It is catalytically catastrophic, but strongly activated by AroG." evidence="4">
    <original>R</original>
    <variation>K</variation>
    <location>
        <position position="61"/>
    </location>
</feature>
<feature type="mutagenesis site" description="The catalytic efficiency and the affinity are 5 and 3-fold lower than the wild-type. The activation by AroG is 10-fold lower than the wild-type." evidence="4">
    <original>G</original>
    <variation>A</variation>
    <location>
        <position position="101"/>
    </location>
</feature>
<feature type="mutagenesis site" description="The catalytic efficiency and the affinity are slightly modified. The activation by AroG is 2-fold lower than the wild-type." evidence="4">
    <original>R</original>
    <variation>A</variation>
    <location>
        <position position="102"/>
    </location>
</feature>
<feature type="mutagenesis site" description="The catalytic efficiency and the affinity are higher than the wild-type. The activation by AroG is 20-fold lower than the wild-type.">
    <location>
        <begin position="103"/>
        <end position="105"/>
    </location>
</feature>
<feature type="mutagenesis site" description="The catalytic efficiency and the affinity are identical to the wild-type. The activation by AroG is 10-fold lower than the wild type." evidence="4">
    <original>L</original>
    <variation>A</variation>
    <location>
        <position position="103"/>
    </location>
</feature>
<feature type="helix" evidence="9">
    <location>
        <begin position="27"/>
        <end position="29"/>
    </location>
</feature>
<feature type="helix" evidence="9">
    <location>
        <begin position="30"/>
        <end position="63"/>
    </location>
</feature>
<feature type="helix" evidence="9">
    <location>
        <begin position="71"/>
        <end position="81"/>
    </location>
</feature>
<feature type="helix" evidence="9">
    <location>
        <begin position="82"/>
        <end position="84"/>
    </location>
</feature>
<feature type="helix" evidence="9">
    <location>
        <begin position="86"/>
        <end position="93"/>
    </location>
</feature>
<protein>
    <recommendedName>
        <fullName evidence="5">Intracellular chorismate mutase</fullName>
        <shortName evidence="5">CM</shortName>
        <ecNumber evidence="2 3 4">5.4.99.5</ecNumber>
    </recommendedName>
</protein>
<accession>P9WIC1</accession>
<accession>L0T5D6</accession>
<accession>P64767</accession>
<accession>P71562</accession>
<dbReference type="EC" id="5.4.99.5" evidence="2 3 4"/>
<dbReference type="EMBL" id="AL123456">
    <property type="protein sequence ID" value="CCP43696.1"/>
    <property type="molecule type" value="Genomic_DNA"/>
</dbReference>
<dbReference type="PIR" id="B70716">
    <property type="entry name" value="B70716"/>
</dbReference>
<dbReference type="RefSeq" id="NP_215463.1">
    <property type="nucleotide sequence ID" value="NC_000962.3"/>
</dbReference>
<dbReference type="RefSeq" id="WP_003404838.1">
    <property type="nucleotide sequence ID" value="NZ_NVQJ01000001.1"/>
</dbReference>
<dbReference type="PDB" id="2QBV">
    <property type="method" value="X-ray"/>
    <property type="resolution" value="2.00 A"/>
    <property type="chains" value="A=16-105"/>
</dbReference>
<dbReference type="PDB" id="2VKL">
    <property type="method" value="X-ray"/>
    <property type="resolution" value="1.65 A"/>
    <property type="chains" value="A=16-105"/>
</dbReference>
<dbReference type="PDB" id="2W19">
    <property type="method" value="X-ray"/>
    <property type="resolution" value="2.15 A"/>
    <property type="chains" value="C/D=16-105"/>
</dbReference>
<dbReference type="PDB" id="2W1A">
    <property type="method" value="X-ray"/>
    <property type="resolution" value="2.35 A"/>
    <property type="chains" value="C/D=16-105"/>
</dbReference>
<dbReference type="PDB" id="5CKX">
    <property type="method" value="X-ray"/>
    <property type="resolution" value="2.70 A"/>
    <property type="chains" value="C/D=16-105"/>
</dbReference>
<dbReference type="PDB" id="5MPV">
    <property type="method" value="X-ray"/>
    <property type="resolution" value="1.49 A"/>
    <property type="chains" value="D=16-93"/>
</dbReference>
<dbReference type="PDB" id="6YGT">
    <property type="method" value="X-ray"/>
    <property type="resolution" value="1.64 A"/>
    <property type="chains" value="AAA=16-105"/>
</dbReference>
<dbReference type="PDBsum" id="2QBV"/>
<dbReference type="PDBsum" id="2VKL"/>
<dbReference type="PDBsum" id="2W19"/>
<dbReference type="PDBsum" id="2W1A"/>
<dbReference type="PDBsum" id="5CKX"/>
<dbReference type="PDBsum" id="5MPV"/>
<dbReference type="PDBsum" id="6YGT"/>
<dbReference type="SMR" id="P9WIC1"/>
<dbReference type="FunCoup" id="P9WIC1">
    <property type="interactions" value="109"/>
</dbReference>
<dbReference type="IntAct" id="P9WIC1">
    <property type="interactions" value="1"/>
</dbReference>
<dbReference type="MINT" id="P9WIC1"/>
<dbReference type="STRING" id="83332.Rv0948c"/>
<dbReference type="BindingDB" id="P9WIC1"/>
<dbReference type="ChEMBL" id="CHEMBL2069157"/>
<dbReference type="PaxDb" id="83332-Rv0948c"/>
<dbReference type="DNASU" id="885485"/>
<dbReference type="GeneID" id="885485"/>
<dbReference type="KEGG" id="mtu:Rv0948c"/>
<dbReference type="KEGG" id="mtv:RVBD_0948c"/>
<dbReference type="PATRIC" id="fig|83332.111.peg.1051"/>
<dbReference type="TubercuList" id="Rv0948c"/>
<dbReference type="eggNOG" id="COG1605">
    <property type="taxonomic scope" value="Bacteria"/>
</dbReference>
<dbReference type="InParanoid" id="P9WIC1"/>
<dbReference type="OrthoDB" id="4424544at2"/>
<dbReference type="PhylomeDB" id="P9WIC1"/>
<dbReference type="BRENDA" id="5.4.99.5">
    <property type="organism ID" value="3445"/>
</dbReference>
<dbReference type="SABIO-RK" id="P9WIC1"/>
<dbReference type="UniPathway" id="UPA00120">
    <property type="reaction ID" value="UER00203"/>
</dbReference>
<dbReference type="EvolutionaryTrace" id="P9WIC1"/>
<dbReference type="PRO" id="PR:P9WIC1"/>
<dbReference type="Proteomes" id="UP000001584">
    <property type="component" value="Chromosome"/>
</dbReference>
<dbReference type="GO" id="GO:0005737">
    <property type="term" value="C:cytoplasm"/>
    <property type="evidence" value="ECO:0007669"/>
    <property type="project" value="UniProtKB-SubCell"/>
</dbReference>
<dbReference type="GO" id="GO:0005886">
    <property type="term" value="C:plasma membrane"/>
    <property type="evidence" value="ECO:0007005"/>
    <property type="project" value="MTBBASE"/>
</dbReference>
<dbReference type="GO" id="GO:0004106">
    <property type="term" value="F:chorismate mutase activity"/>
    <property type="evidence" value="ECO:0000314"/>
    <property type="project" value="MTBBASE"/>
</dbReference>
<dbReference type="GO" id="GO:0008652">
    <property type="term" value="P:amino acid biosynthetic process"/>
    <property type="evidence" value="ECO:0007669"/>
    <property type="project" value="UniProtKB-KW"/>
</dbReference>
<dbReference type="GO" id="GO:0009095">
    <property type="term" value="P:aromatic amino acid family biosynthetic process, prephenate pathway"/>
    <property type="evidence" value="ECO:0000314"/>
    <property type="project" value="MTBBASE"/>
</dbReference>
<dbReference type="GO" id="GO:0046417">
    <property type="term" value="P:chorismate metabolic process"/>
    <property type="evidence" value="ECO:0000314"/>
    <property type="project" value="MTBBASE"/>
</dbReference>
<dbReference type="GO" id="GO:0009697">
    <property type="term" value="P:salicylic acid biosynthetic process"/>
    <property type="evidence" value="ECO:0000318"/>
    <property type="project" value="GO_Central"/>
</dbReference>
<dbReference type="FunFam" id="1.20.59.10:FF:000009">
    <property type="entry name" value="Intracellular chorismate mutase"/>
    <property type="match status" value="1"/>
</dbReference>
<dbReference type="Gene3D" id="1.20.59.10">
    <property type="entry name" value="Chorismate mutase"/>
    <property type="match status" value="1"/>
</dbReference>
<dbReference type="InterPro" id="IPR036263">
    <property type="entry name" value="Chorismate_II_sf"/>
</dbReference>
<dbReference type="InterPro" id="IPR051331">
    <property type="entry name" value="Chorismate_mutase-related"/>
</dbReference>
<dbReference type="InterPro" id="IPR010958">
    <property type="entry name" value="Chorismate_mutase_highGC-bac"/>
</dbReference>
<dbReference type="InterPro" id="IPR036979">
    <property type="entry name" value="CM_dom_sf"/>
</dbReference>
<dbReference type="InterPro" id="IPR002701">
    <property type="entry name" value="CM_II_prokaryot"/>
</dbReference>
<dbReference type="NCBIfam" id="TIGR01808">
    <property type="entry name" value="CM_M_hiGC-arch"/>
    <property type="match status" value="1"/>
</dbReference>
<dbReference type="NCBIfam" id="NF005894">
    <property type="entry name" value="PRK07857.1"/>
    <property type="match status" value="1"/>
</dbReference>
<dbReference type="PANTHER" id="PTHR38041">
    <property type="entry name" value="CHORISMATE MUTASE"/>
    <property type="match status" value="1"/>
</dbReference>
<dbReference type="PANTHER" id="PTHR38041:SF1">
    <property type="entry name" value="CHORISMATE MUTASE"/>
    <property type="match status" value="1"/>
</dbReference>
<dbReference type="Pfam" id="PF01817">
    <property type="entry name" value="CM_2"/>
    <property type="match status" value="1"/>
</dbReference>
<dbReference type="SMART" id="SM00830">
    <property type="entry name" value="CM_2"/>
    <property type="match status" value="1"/>
</dbReference>
<dbReference type="SUPFAM" id="SSF48600">
    <property type="entry name" value="Chorismate mutase II"/>
    <property type="match status" value="1"/>
</dbReference>
<dbReference type="PROSITE" id="PS51168">
    <property type="entry name" value="CHORISMATE_MUT_2"/>
    <property type="match status" value="1"/>
</dbReference>
<proteinExistence type="evidence at protein level"/>
<organism>
    <name type="scientific">Mycobacterium tuberculosis (strain ATCC 25618 / H37Rv)</name>
    <dbReference type="NCBI Taxonomy" id="83332"/>
    <lineage>
        <taxon>Bacteria</taxon>
        <taxon>Bacillati</taxon>
        <taxon>Actinomycetota</taxon>
        <taxon>Actinomycetes</taxon>
        <taxon>Mycobacteriales</taxon>
        <taxon>Mycobacteriaceae</taxon>
        <taxon>Mycobacterium</taxon>
        <taxon>Mycobacterium tuberculosis complex</taxon>
    </lineage>
</organism>
<name>CHMU_MYCTU</name>
<gene>
    <name type="ordered locus">Rv0948c</name>
    <name type="ORF">MTCY10D7.26</name>
</gene>
<reference key="1">
    <citation type="journal article" date="1998" name="Nature">
        <title>Deciphering the biology of Mycobacterium tuberculosis from the complete genome sequence.</title>
        <authorList>
            <person name="Cole S.T."/>
            <person name="Brosch R."/>
            <person name="Parkhill J."/>
            <person name="Garnier T."/>
            <person name="Churcher C.M."/>
            <person name="Harris D.E."/>
            <person name="Gordon S.V."/>
            <person name="Eiglmeier K."/>
            <person name="Gas S."/>
            <person name="Barry C.E. III"/>
            <person name="Tekaia F."/>
            <person name="Badcock K."/>
            <person name="Basham D."/>
            <person name="Brown D."/>
            <person name="Chillingworth T."/>
            <person name="Connor R."/>
            <person name="Davies R.M."/>
            <person name="Devlin K."/>
            <person name="Feltwell T."/>
            <person name="Gentles S."/>
            <person name="Hamlin N."/>
            <person name="Holroyd S."/>
            <person name="Hornsby T."/>
            <person name="Jagels K."/>
            <person name="Krogh A."/>
            <person name="McLean J."/>
            <person name="Moule S."/>
            <person name="Murphy L.D."/>
            <person name="Oliver S."/>
            <person name="Osborne J."/>
            <person name="Quail M.A."/>
            <person name="Rajandream M.A."/>
            <person name="Rogers J."/>
            <person name="Rutter S."/>
            <person name="Seeger K."/>
            <person name="Skelton S."/>
            <person name="Squares S."/>
            <person name="Squares R."/>
            <person name="Sulston J.E."/>
            <person name="Taylor K."/>
            <person name="Whitehead S."/>
            <person name="Barrell B.G."/>
        </authorList>
    </citation>
    <scope>NUCLEOTIDE SEQUENCE [LARGE SCALE GENOMIC DNA]</scope>
    <source>
        <strain>ATCC 25618 / H37Rv</strain>
    </source>
</reference>
<reference key="2">
    <citation type="journal article" date="2005" name="J. Biol. Chem.">
        <title>Purified recombinant hypothetical protein coded by open reading frame Rv1885c of Mycobacterium tuberculosis exhibits a monofunctional AroQ class of periplasmic chorismate mutase activity.</title>
        <authorList>
            <person name="Prakash P."/>
            <person name="Aruna B."/>
            <person name="Sardesai A.A."/>
            <person name="Hasnain S.E."/>
        </authorList>
    </citation>
    <scope>FUNCTION</scope>
    <scope>CATALYTIC ACTIVITY</scope>
    <scope>BIOPHYSICOCHEMICAL PROPERTIES</scope>
    <scope>PATHWAY</scope>
    <source>
        <strain>ATCC 25618 / H37Rv</strain>
    </source>
</reference>
<reference key="3">
    <citation type="journal article" date="2011" name="Mol. Cell. Proteomics">
        <title>Proteogenomic analysis of Mycobacterium tuberculosis by high resolution mass spectrometry.</title>
        <authorList>
            <person name="Kelkar D.S."/>
            <person name="Kumar D."/>
            <person name="Kumar P."/>
            <person name="Balakrishnan L."/>
            <person name="Muthusamy B."/>
            <person name="Yadav A.K."/>
            <person name="Shrivastava P."/>
            <person name="Marimuthu A."/>
            <person name="Anand S."/>
            <person name="Sundaram H."/>
            <person name="Kingsbury R."/>
            <person name="Harsha H.C."/>
            <person name="Nair B."/>
            <person name="Prasad T.S."/>
            <person name="Chauhan D.S."/>
            <person name="Katoch K."/>
            <person name="Katoch V.M."/>
            <person name="Kumar P."/>
            <person name="Chaerkady R."/>
            <person name="Ramachandran S."/>
            <person name="Dash D."/>
            <person name="Pandey A."/>
        </authorList>
    </citation>
    <scope>IDENTIFICATION BY MASS SPECTROMETRY [LARGE SCALE ANALYSIS]</scope>
    <source>
        <strain>ATCC 25618 / H37Rv</strain>
    </source>
</reference>
<reference key="4">
    <citation type="journal article" date="2008" name="FEBS J.">
        <title>A comparative biochemical and structural analysis of the intracellular chorismate mutase (Rv0948c) from Mycobacterium tuberculosis H(37)R(v) and the secreted chorismate mutase (y2828) from Yersinia pestis.</title>
        <authorList>
            <person name="Kim S.K."/>
            <person name="Reddy S.K."/>
            <person name="Nelson B.C."/>
            <person name="Robinson H."/>
            <person name="Reddy P.T."/>
            <person name="Ladner J.E."/>
        </authorList>
    </citation>
    <scope>X-RAY CRYSTALLOGRAPHY (2.0 ANGSTROMS) OF 16-105</scope>
    <scope>FUNCTION</scope>
    <scope>CATALYTIC ACTIVITY</scope>
    <scope>BIOPHYSICOCHEMICAL PROPERTIES</scope>
    <scope>SUBUNIT</scope>
    <scope>INTERACTION WITH AROG</scope>
    <scope>MASS SPECTROMETRY</scope>
    <scope>PATHWAY</scope>
    <source>
        <strain>ATCC 25618 / H37Rv</strain>
    </source>
</reference>
<reference key="5">
    <citation type="journal article" date="2009" name="EMBO J.">
        <title>Structure and function of a complex between chorismate mutase and DAHP synthase: efficiency boost for the junior partner.</title>
        <authorList>
            <person name="Sasso S."/>
            <person name="Okvist M."/>
            <person name="Roderer K."/>
            <person name="Gamper M."/>
            <person name="Codoni G."/>
            <person name="Krengel U."/>
            <person name="Kast P."/>
        </authorList>
    </citation>
    <scope>X-RAY CRYSTALLOGRAPHY (1.65 ANGSTROMS) OF 16-105 IN COMPLEX WITH SUBSTRATE ANALOGS AND WITH AROG</scope>
    <scope>FUNCTION</scope>
    <scope>CATALYTIC ACTIVITY</scope>
    <scope>ACTIVITY REGULATION</scope>
    <scope>SUBUNIT</scope>
    <scope>INTERACTION WITH AROG</scope>
    <scope>MUTAGENESIS OF ARG-61; GLY-101; ARG-102 AND LEU-103</scope>
    <scope>BIOPHYSICOCHEMICAL PROPERTIES</scope>
    <scope>IDENTIFICATION BY MASS SPECTROMETRY</scope>
    <scope>PATHWAY</scope>
    <source>
        <strain>ATCC 25618 / H37Rv</strain>
    </source>
</reference>
<comment type="function">
    <text evidence="2 3 4">Catalyzes the Claisen rearrangement of chorismate to prephenate. Probably involved in the aromatic amino acid biosynthesis.</text>
</comment>
<comment type="catalytic activity">
    <reaction evidence="2 3 4">
        <text>chorismate = prephenate</text>
        <dbReference type="Rhea" id="RHEA:13897"/>
        <dbReference type="ChEBI" id="CHEBI:29748"/>
        <dbReference type="ChEBI" id="CHEBI:29934"/>
        <dbReference type="EC" id="5.4.99.5"/>
    </reaction>
</comment>
<comment type="activity regulation">
    <text evidence="4">The formation of the complex with AroG activates the chorismate mutase activity by more than two orders of magnitude to a catalytic efficiency (kcat/Km) typical for chorismate mutase. This activation is primarily caused by a more than 30-fold-decreased Km value, but also by a four-fold increase in kcat. The activity of the complex is inhibited by phenylalanine and tyrosine by about 70 and 40%, respectively.</text>
</comment>
<comment type="biophysicochemical properties">
    <kinetics>
        <KM evidence="2">500 uM for chorismate (at 30 degrees Celsius and at pH 7.5)</KM>
        <KM evidence="4">1140 uM for chorismate (at 30 degrees Celsius and at pH 7.5)</KM>
        <KM evidence="3">1500 uM for chorismate (at 30 degrees Celsius and at pH 7.5)</KM>
        <Vmax evidence="2">1.2 umol/min/mg enzyme (at 30 degrees Celsius and at pH 7.5)</Vmax>
    </kinetics>
</comment>
<comment type="pathway">
    <text evidence="2 3 4">Metabolic intermediate biosynthesis; prephenate biosynthesis; prephenate from chorismate: step 1/1.</text>
</comment>
<comment type="subunit">
    <text evidence="3 4">Homodimer. Interacts with AroG.</text>
</comment>
<comment type="interaction">
    <interactant intactId="EBI-5241850">
        <id>P9WIC1</id>
    </interactant>
    <interactant intactId="EBI-5241825">
        <id>O53512</id>
        <label>aroG</label>
    </interactant>
    <organismsDiffer>false</organismsDiffer>
    <experiments>2</experiments>
</comment>
<comment type="subcellular location">
    <subcellularLocation>
        <location evidence="6">Cytoplasm</location>
    </subcellularLocation>
</comment>
<comment type="mass spectrometry" mass="11771.0" method="MALDI" evidence="3"/>
<keyword id="KW-0002">3D-structure</keyword>
<keyword id="KW-0028">Amino-acid biosynthesis</keyword>
<keyword id="KW-0057">Aromatic amino acid biosynthesis</keyword>
<keyword id="KW-0963">Cytoplasm</keyword>
<keyword id="KW-0413">Isomerase</keyword>
<keyword id="KW-1185">Reference proteome</keyword>
<sequence length="105" mass="11771">MRPEPPHHENAELAAMNLEMLESQPVPEIDTLREEIDRLDAEILALVKRRAEVSKAIGKARMASGGTRLVHSREMKVIERYSELGPDGKDLAILLLRLGRGRLGH</sequence>